<protein>
    <recommendedName>
        <fullName>Acidic phospholipase A2 Tpu-E6b</fullName>
        <shortName>svPLA2</shortName>
        <ecNumber>3.1.1.4</ecNumber>
    </recommendedName>
    <alternativeName>
        <fullName>Phosphatidylcholine 2-acylhydrolase</fullName>
    </alternativeName>
</protein>
<keyword id="KW-0903">Direct protein sequencing</keyword>
<keyword id="KW-1015">Disulfide bond</keyword>
<keyword id="KW-1199">Hemostasis impairing toxin</keyword>
<keyword id="KW-0378">Hydrolase</keyword>
<keyword id="KW-0442">Lipid degradation</keyword>
<keyword id="KW-0443">Lipid metabolism</keyword>
<keyword id="KW-0479">Metal-binding</keyword>
<keyword id="KW-1201">Platelet aggregation inhibiting toxin</keyword>
<keyword id="KW-0964">Secreted</keyword>
<keyword id="KW-0800">Toxin</keyword>
<organism>
    <name type="scientific">Craspedocephalus puniceus</name>
    <name type="common">Flat-nosed pitviper</name>
    <name type="synonym">Trimeresurus puniceus</name>
    <dbReference type="NCBI Taxonomy" id="3147916"/>
    <lineage>
        <taxon>Eukaryota</taxon>
        <taxon>Metazoa</taxon>
        <taxon>Chordata</taxon>
        <taxon>Craniata</taxon>
        <taxon>Vertebrata</taxon>
        <taxon>Euteleostomi</taxon>
        <taxon>Lepidosauria</taxon>
        <taxon>Squamata</taxon>
        <taxon>Bifurcata</taxon>
        <taxon>Unidentata</taxon>
        <taxon>Episquamata</taxon>
        <taxon>Toxicofera</taxon>
        <taxon>Serpentes</taxon>
        <taxon>Colubroidea</taxon>
        <taxon>Viperidae</taxon>
        <taxon>Crotalinae</taxon>
        <taxon>Craspedocephalus</taxon>
    </lineage>
</organism>
<proteinExistence type="evidence at protein level"/>
<name>PA2AB_CRAPU</name>
<accession>Q2YHJ5</accession>
<dbReference type="EC" id="3.1.1.4"/>
<dbReference type="EMBL" id="AY355175">
    <property type="protein sequence ID" value="AAR14169.1"/>
    <property type="molecule type" value="mRNA"/>
</dbReference>
<dbReference type="SMR" id="Q2YHJ5"/>
<dbReference type="GO" id="GO:0005576">
    <property type="term" value="C:extracellular region"/>
    <property type="evidence" value="ECO:0007669"/>
    <property type="project" value="UniProtKB-SubCell"/>
</dbReference>
<dbReference type="GO" id="GO:0005509">
    <property type="term" value="F:calcium ion binding"/>
    <property type="evidence" value="ECO:0007669"/>
    <property type="project" value="InterPro"/>
</dbReference>
<dbReference type="GO" id="GO:0047498">
    <property type="term" value="F:calcium-dependent phospholipase A2 activity"/>
    <property type="evidence" value="ECO:0007669"/>
    <property type="project" value="TreeGrafter"/>
</dbReference>
<dbReference type="GO" id="GO:0005543">
    <property type="term" value="F:phospholipid binding"/>
    <property type="evidence" value="ECO:0007669"/>
    <property type="project" value="TreeGrafter"/>
</dbReference>
<dbReference type="GO" id="GO:0090729">
    <property type="term" value="F:toxin activity"/>
    <property type="evidence" value="ECO:0007669"/>
    <property type="project" value="UniProtKB-KW"/>
</dbReference>
<dbReference type="GO" id="GO:0050482">
    <property type="term" value="P:arachidonate secretion"/>
    <property type="evidence" value="ECO:0007669"/>
    <property type="project" value="InterPro"/>
</dbReference>
<dbReference type="GO" id="GO:0016042">
    <property type="term" value="P:lipid catabolic process"/>
    <property type="evidence" value="ECO:0007669"/>
    <property type="project" value="UniProtKB-KW"/>
</dbReference>
<dbReference type="GO" id="GO:0042130">
    <property type="term" value="P:negative regulation of T cell proliferation"/>
    <property type="evidence" value="ECO:0007669"/>
    <property type="project" value="TreeGrafter"/>
</dbReference>
<dbReference type="GO" id="GO:0006644">
    <property type="term" value="P:phospholipid metabolic process"/>
    <property type="evidence" value="ECO:0007669"/>
    <property type="project" value="InterPro"/>
</dbReference>
<dbReference type="CDD" id="cd00125">
    <property type="entry name" value="PLA2c"/>
    <property type="match status" value="1"/>
</dbReference>
<dbReference type="FunFam" id="1.20.90.10:FF:000001">
    <property type="entry name" value="Basic phospholipase A2 homolog"/>
    <property type="match status" value="1"/>
</dbReference>
<dbReference type="Gene3D" id="1.20.90.10">
    <property type="entry name" value="Phospholipase A2 domain"/>
    <property type="match status" value="1"/>
</dbReference>
<dbReference type="InterPro" id="IPR001211">
    <property type="entry name" value="PLipase_A2"/>
</dbReference>
<dbReference type="InterPro" id="IPR033112">
    <property type="entry name" value="PLipase_A2_Asp_AS"/>
</dbReference>
<dbReference type="InterPro" id="IPR016090">
    <property type="entry name" value="PLipase_A2_dom"/>
</dbReference>
<dbReference type="InterPro" id="IPR036444">
    <property type="entry name" value="PLipase_A2_dom_sf"/>
</dbReference>
<dbReference type="InterPro" id="IPR033113">
    <property type="entry name" value="PLipase_A2_His_AS"/>
</dbReference>
<dbReference type="PANTHER" id="PTHR11716">
    <property type="entry name" value="PHOSPHOLIPASE A2 FAMILY MEMBER"/>
    <property type="match status" value="1"/>
</dbReference>
<dbReference type="PANTHER" id="PTHR11716:SF9">
    <property type="entry name" value="PHOSPHOLIPASE A2, MEMBRANE ASSOCIATED"/>
    <property type="match status" value="1"/>
</dbReference>
<dbReference type="Pfam" id="PF00068">
    <property type="entry name" value="Phospholip_A2_1"/>
    <property type="match status" value="1"/>
</dbReference>
<dbReference type="PRINTS" id="PR00389">
    <property type="entry name" value="PHPHLIPASEA2"/>
</dbReference>
<dbReference type="SMART" id="SM00085">
    <property type="entry name" value="PA2c"/>
    <property type="match status" value="1"/>
</dbReference>
<dbReference type="SUPFAM" id="SSF48619">
    <property type="entry name" value="Phospholipase A2, PLA2"/>
    <property type="match status" value="1"/>
</dbReference>
<dbReference type="PROSITE" id="PS00119">
    <property type="entry name" value="PA2_ASP"/>
    <property type="match status" value="1"/>
</dbReference>
<dbReference type="PROSITE" id="PS00118">
    <property type="entry name" value="PA2_HIS"/>
    <property type="match status" value="1"/>
</dbReference>
<sequence>SLMQFETMIMKVAGRSGVWWYGSYGCYCGKGGQGQPQDASDRCCFVHDCCYGKVNGCDPKDDFYTYSSENGDVVCEEDNPCTKEICECDKAAAICFRDNMDTYQNKYWFYPTKYCKEESEPC</sequence>
<reference key="1">
    <citation type="journal article" date="2005" name="FEBS J.">
        <title>Unusual venom phospholipases A2 of two primitive tree vipers Trimeresurus puniceus and Trimeresurus borneensis.</title>
        <authorList>
            <person name="Wang Y.-M."/>
            <person name="Peng H.-F."/>
            <person name="Tsai I.-H."/>
        </authorList>
    </citation>
    <scope>NUCLEOTIDE SEQUENCE [MRNA]</scope>
    <scope>PROTEIN SEQUENCE OF 1-23</scope>
    <scope>FUNCTION</scope>
    <scope>SUBUNIT</scope>
    <scope>MASS SPECTROMETRY</scope>
    <source>
        <tissue>Venom</tissue>
        <tissue>Venom gland</tissue>
    </source>
</reference>
<feature type="chain" id="PRO_0000419059" description="Acidic phospholipase A2 Tpu-E6b">
    <location>
        <begin position="1"/>
        <end position="122"/>
    </location>
</feature>
<feature type="active site" evidence="3">
    <location>
        <position position="47"/>
    </location>
</feature>
<feature type="active site" evidence="3">
    <location>
        <position position="89"/>
    </location>
</feature>
<feature type="binding site" evidence="2">
    <location>
        <position position="27"/>
    </location>
    <ligand>
        <name>Ca(2+)</name>
        <dbReference type="ChEBI" id="CHEBI:29108"/>
    </ligand>
</feature>
<feature type="binding site" evidence="2">
    <location>
        <position position="29"/>
    </location>
    <ligand>
        <name>Ca(2+)</name>
        <dbReference type="ChEBI" id="CHEBI:29108"/>
    </ligand>
</feature>
<feature type="binding site" evidence="2">
    <location>
        <position position="31"/>
    </location>
    <ligand>
        <name>Ca(2+)</name>
        <dbReference type="ChEBI" id="CHEBI:29108"/>
    </ligand>
</feature>
<feature type="binding site" evidence="2">
    <location>
        <position position="48"/>
    </location>
    <ligand>
        <name>Ca(2+)</name>
        <dbReference type="ChEBI" id="CHEBI:29108"/>
    </ligand>
</feature>
<feature type="disulfide bond" evidence="2">
    <location>
        <begin position="26"/>
        <end position="115"/>
    </location>
</feature>
<feature type="disulfide bond" evidence="2">
    <location>
        <begin position="28"/>
        <end position="44"/>
    </location>
</feature>
<feature type="disulfide bond" evidence="2">
    <location>
        <begin position="43"/>
        <end position="95"/>
    </location>
</feature>
<feature type="disulfide bond" evidence="2">
    <location>
        <begin position="49"/>
        <end position="122"/>
    </location>
</feature>
<feature type="disulfide bond" evidence="2">
    <location>
        <begin position="50"/>
        <end position="88"/>
    </location>
</feature>
<feature type="disulfide bond" evidence="2">
    <location>
        <begin position="57"/>
        <end position="81"/>
    </location>
</feature>
<feature type="disulfide bond" evidence="2">
    <location>
        <begin position="75"/>
        <end position="86"/>
    </location>
</feature>
<comment type="function">
    <text evidence="6">Snake venom phospholipase A2 (PLA2) that weakly inhibits ADP-induced platelet aggregation when tested on platelet rich plasma from human and rabbit blood (15-25% of inhibition at 5-10 ug of enzyme). Exhibits moderate hydrolytic activities toward L-dipalmitoyl phosphatidylcholine. PLA2 catalyzes the calcium-dependent hydrolysis of the 2-acyl groups in 3-sn-phosphoglycerides.</text>
</comment>
<comment type="catalytic activity">
    <reaction evidence="4 5">
        <text>a 1,2-diacyl-sn-glycero-3-phosphocholine + H2O = a 1-acyl-sn-glycero-3-phosphocholine + a fatty acid + H(+)</text>
        <dbReference type="Rhea" id="RHEA:15801"/>
        <dbReference type="ChEBI" id="CHEBI:15377"/>
        <dbReference type="ChEBI" id="CHEBI:15378"/>
        <dbReference type="ChEBI" id="CHEBI:28868"/>
        <dbReference type="ChEBI" id="CHEBI:57643"/>
        <dbReference type="ChEBI" id="CHEBI:58168"/>
        <dbReference type="EC" id="3.1.1.4"/>
    </reaction>
</comment>
<comment type="cofactor">
    <cofactor evidence="1">
        <name>Ca(2+)</name>
        <dbReference type="ChEBI" id="CHEBI:29108"/>
    </cofactor>
    <text evidence="1">Binds 1 Ca(2+) ion.</text>
</comment>
<comment type="subunit">
    <text evidence="6">Monomer.</text>
</comment>
<comment type="subcellular location">
    <subcellularLocation>
        <location>Secreted</location>
    </subcellularLocation>
</comment>
<comment type="tissue specificity">
    <text>Expressed by the venom gland.</text>
</comment>
<comment type="mass spectrometry"/>
<comment type="similarity">
    <text evidence="7">Belongs to the phospholipase A2 family. Group II subfamily. D49 sub-subfamily.</text>
</comment>
<evidence type="ECO:0000250" key="1"/>
<evidence type="ECO:0000250" key="2">
    <source>
        <dbReference type="UniProtKB" id="O42191"/>
    </source>
</evidence>
<evidence type="ECO:0000250" key="3">
    <source>
        <dbReference type="UniProtKB" id="P06859"/>
    </source>
</evidence>
<evidence type="ECO:0000255" key="4">
    <source>
        <dbReference type="PROSITE-ProRule" id="PRU10035"/>
    </source>
</evidence>
<evidence type="ECO:0000255" key="5">
    <source>
        <dbReference type="PROSITE-ProRule" id="PRU10036"/>
    </source>
</evidence>
<evidence type="ECO:0000269" key="6">
    <source>
    </source>
</evidence>
<evidence type="ECO:0000305" key="7"/>